<proteinExistence type="inferred from homology"/>
<reference key="1">
    <citation type="submission" date="2007-11" db="EMBL/GenBank/DDBJ databases">
        <title>Complete sequence of Petroga mobilis SJ95.</title>
        <authorList>
            <consortium name="US DOE Joint Genome Institute"/>
            <person name="Copeland A."/>
            <person name="Lucas S."/>
            <person name="Lapidus A."/>
            <person name="Barry K."/>
            <person name="Glavina del Rio T."/>
            <person name="Dalin E."/>
            <person name="Tice H."/>
            <person name="Pitluck S."/>
            <person name="Meincke L."/>
            <person name="Brettin T."/>
            <person name="Bruce D."/>
            <person name="Detter J.C."/>
            <person name="Han C."/>
            <person name="Kuske C.R."/>
            <person name="Schmutz J."/>
            <person name="Larimer F."/>
            <person name="Land M."/>
            <person name="Hauser L."/>
            <person name="Kyrpides N."/>
            <person name="Mikhailova N."/>
            <person name="Noll K."/>
            <person name="Richardson P."/>
        </authorList>
    </citation>
    <scope>NUCLEOTIDE SEQUENCE [LARGE SCALE GENOMIC DNA]</scope>
    <source>
        <strain>DSM 10674 / SJ95</strain>
    </source>
</reference>
<sequence length="89" mass="9989">MTVKPLGNRLLIKPITEERKTEGGIVLPDSAKEKPQKAEVKEVGKLDEDYDLKVGDKVIFSKYAGTEIKIDDEDYIIIDVEDVLAKVED</sequence>
<comment type="function">
    <text evidence="1">Together with the chaperonin GroEL, plays an essential role in assisting protein folding. The GroEL-GroES system forms a nano-cage that allows encapsulation of the non-native substrate proteins and provides a physical environment optimized to promote and accelerate protein folding. GroES binds to the apical surface of the GroEL ring, thereby capping the opening of the GroEL channel.</text>
</comment>
<comment type="subunit">
    <text evidence="1">Heptamer of 7 subunits arranged in a ring. Interacts with the chaperonin GroEL.</text>
</comment>
<comment type="subcellular location">
    <subcellularLocation>
        <location evidence="1">Cytoplasm</location>
    </subcellularLocation>
</comment>
<comment type="similarity">
    <text evidence="1">Belongs to the GroES chaperonin family.</text>
</comment>
<dbReference type="EMBL" id="CP000879">
    <property type="protein sequence ID" value="ABX31875.1"/>
    <property type="molecule type" value="Genomic_DNA"/>
</dbReference>
<dbReference type="RefSeq" id="WP_012208976.1">
    <property type="nucleotide sequence ID" value="NC_010003.1"/>
</dbReference>
<dbReference type="SMR" id="A9BHK3"/>
<dbReference type="STRING" id="403833.Pmob_1157"/>
<dbReference type="KEGG" id="pmo:Pmob_1157"/>
<dbReference type="eggNOG" id="COG0234">
    <property type="taxonomic scope" value="Bacteria"/>
</dbReference>
<dbReference type="HOGENOM" id="CLU_132825_2_3_0"/>
<dbReference type="OrthoDB" id="9806791at2"/>
<dbReference type="Proteomes" id="UP000000789">
    <property type="component" value="Chromosome"/>
</dbReference>
<dbReference type="GO" id="GO:0005737">
    <property type="term" value="C:cytoplasm"/>
    <property type="evidence" value="ECO:0007669"/>
    <property type="project" value="UniProtKB-SubCell"/>
</dbReference>
<dbReference type="GO" id="GO:0005524">
    <property type="term" value="F:ATP binding"/>
    <property type="evidence" value="ECO:0007669"/>
    <property type="project" value="InterPro"/>
</dbReference>
<dbReference type="GO" id="GO:0046872">
    <property type="term" value="F:metal ion binding"/>
    <property type="evidence" value="ECO:0007669"/>
    <property type="project" value="TreeGrafter"/>
</dbReference>
<dbReference type="GO" id="GO:0044183">
    <property type="term" value="F:protein folding chaperone"/>
    <property type="evidence" value="ECO:0007669"/>
    <property type="project" value="InterPro"/>
</dbReference>
<dbReference type="GO" id="GO:0051087">
    <property type="term" value="F:protein-folding chaperone binding"/>
    <property type="evidence" value="ECO:0007669"/>
    <property type="project" value="TreeGrafter"/>
</dbReference>
<dbReference type="GO" id="GO:0051082">
    <property type="term" value="F:unfolded protein binding"/>
    <property type="evidence" value="ECO:0007669"/>
    <property type="project" value="TreeGrafter"/>
</dbReference>
<dbReference type="GO" id="GO:0051085">
    <property type="term" value="P:chaperone cofactor-dependent protein refolding"/>
    <property type="evidence" value="ECO:0007669"/>
    <property type="project" value="TreeGrafter"/>
</dbReference>
<dbReference type="CDD" id="cd00320">
    <property type="entry name" value="cpn10"/>
    <property type="match status" value="1"/>
</dbReference>
<dbReference type="FunFam" id="2.30.33.40:FF:000001">
    <property type="entry name" value="10 kDa chaperonin"/>
    <property type="match status" value="1"/>
</dbReference>
<dbReference type="Gene3D" id="2.30.33.40">
    <property type="entry name" value="GroES chaperonin"/>
    <property type="match status" value="1"/>
</dbReference>
<dbReference type="HAMAP" id="MF_00580">
    <property type="entry name" value="CH10"/>
    <property type="match status" value="1"/>
</dbReference>
<dbReference type="InterPro" id="IPR020818">
    <property type="entry name" value="Chaperonin_GroES"/>
</dbReference>
<dbReference type="InterPro" id="IPR037124">
    <property type="entry name" value="Chaperonin_GroES_sf"/>
</dbReference>
<dbReference type="InterPro" id="IPR018369">
    <property type="entry name" value="Chaprnonin_Cpn10_CS"/>
</dbReference>
<dbReference type="InterPro" id="IPR011032">
    <property type="entry name" value="GroES-like_sf"/>
</dbReference>
<dbReference type="NCBIfam" id="NF001531">
    <property type="entry name" value="PRK00364.2-2"/>
    <property type="match status" value="1"/>
</dbReference>
<dbReference type="NCBIfam" id="NF011106">
    <property type="entry name" value="PRK14533.1"/>
    <property type="match status" value="1"/>
</dbReference>
<dbReference type="PANTHER" id="PTHR10772">
    <property type="entry name" value="10 KDA HEAT SHOCK PROTEIN"/>
    <property type="match status" value="1"/>
</dbReference>
<dbReference type="PANTHER" id="PTHR10772:SF63">
    <property type="entry name" value="20 KDA CHAPERONIN, CHLOROPLASTIC"/>
    <property type="match status" value="1"/>
</dbReference>
<dbReference type="Pfam" id="PF00166">
    <property type="entry name" value="Cpn10"/>
    <property type="match status" value="1"/>
</dbReference>
<dbReference type="PRINTS" id="PR00297">
    <property type="entry name" value="CHAPERONIN10"/>
</dbReference>
<dbReference type="SMART" id="SM00883">
    <property type="entry name" value="Cpn10"/>
    <property type="match status" value="1"/>
</dbReference>
<dbReference type="SUPFAM" id="SSF50129">
    <property type="entry name" value="GroES-like"/>
    <property type="match status" value="1"/>
</dbReference>
<dbReference type="PROSITE" id="PS00681">
    <property type="entry name" value="CHAPERONINS_CPN10"/>
    <property type="match status" value="1"/>
</dbReference>
<evidence type="ECO:0000255" key="1">
    <source>
        <dbReference type="HAMAP-Rule" id="MF_00580"/>
    </source>
</evidence>
<keyword id="KW-0143">Chaperone</keyword>
<keyword id="KW-0963">Cytoplasm</keyword>
<feature type="chain" id="PRO_1000082385" description="Co-chaperonin GroES">
    <location>
        <begin position="1"/>
        <end position="89"/>
    </location>
</feature>
<gene>
    <name evidence="1" type="primary">groES</name>
    <name evidence="1" type="synonym">groS</name>
    <name type="ordered locus">Pmob_1157</name>
</gene>
<accession>A9BHK3</accession>
<protein>
    <recommendedName>
        <fullName evidence="1">Co-chaperonin GroES</fullName>
    </recommendedName>
    <alternativeName>
        <fullName evidence="1">10 kDa chaperonin</fullName>
    </alternativeName>
    <alternativeName>
        <fullName evidence="1">Chaperonin-10</fullName>
        <shortName evidence="1">Cpn10</shortName>
    </alternativeName>
</protein>
<name>CH10_PETMO</name>
<organism>
    <name type="scientific">Petrotoga mobilis (strain DSM 10674 / SJ95)</name>
    <dbReference type="NCBI Taxonomy" id="403833"/>
    <lineage>
        <taxon>Bacteria</taxon>
        <taxon>Thermotogati</taxon>
        <taxon>Thermotogota</taxon>
        <taxon>Thermotogae</taxon>
        <taxon>Petrotogales</taxon>
        <taxon>Petrotogaceae</taxon>
        <taxon>Petrotoga</taxon>
    </lineage>
</organism>